<comment type="function">
    <text evidence="1">Forms part of the ribosomal stalk which helps the ribosome interact with GTP-bound translation factors.</text>
</comment>
<comment type="subunit">
    <text evidence="1">Part of the ribosomal stalk of the 50S ribosomal subunit. Interacts with L10 and the large rRNA to form the base of the stalk. L10 forms an elongated spine to which L12 dimers bind in a sequential fashion forming a multimeric L10(L12)X complex.</text>
</comment>
<comment type="PTM">
    <text evidence="1">One or more lysine residues are methylated.</text>
</comment>
<comment type="similarity">
    <text evidence="1">Belongs to the universal ribosomal protein uL11 family.</text>
</comment>
<feature type="chain" id="PRO_1000195717" description="Large ribosomal subunit protein uL11">
    <location>
        <begin position="1"/>
        <end position="147"/>
    </location>
</feature>
<organism>
    <name type="scientific">Sorangium cellulosum (strain So ce56)</name>
    <name type="common">Polyangium cellulosum (strain So ce56)</name>
    <dbReference type="NCBI Taxonomy" id="448385"/>
    <lineage>
        <taxon>Bacteria</taxon>
        <taxon>Pseudomonadati</taxon>
        <taxon>Myxococcota</taxon>
        <taxon>Polyangia</taxon>
        <taxon>Polyangiales</taxon>
        <taxon>Polyangiaceae</taxon>
        <taxon>Sorangium</taxon>
    </lineage>
</organism>
<gene>
    <name evidence="1" type="primary">rplK</name>
    <name type="ordered locus">sce0406</name>
</gene>
<reference key="1">
    <citation type="journal article" date="2007" name="Nat. Biotechnol.">
        <title>Complete genome sequence of the myxobacterium Sorangium cellulosum.</title>
        <authorList>
            <person name="Schneiker S."/>
            <person name="Perlova O."/>
            <person name="Kaiser O."/>
            <person name="Gerth K."/>
            <person name="Alici A."/>
            <person name="Altmeyer M.O."/>
            <person name="Bartels D."/>
            <person name="Bekel T."/>
            <person name="Beyer S."/>
            <person name="Bode E."/>
            <person name="Bode H.B."/>
            <person name="Bolten C.J."/>
            <person name="Choudhuri J.V."/>
            <person name="Doss S."/>
            <person name="Elnakady Y.A."/>
            <person name="Frank B."/>
            <person name="Gaigalat L."/>
            <person name="Goesmann A."/>
            <person name="Groeger C."/>
            <person name="Gross F."/>
            <person name="Jelsbak L."/>
            <person name="Jelsbak L."/>
            <person name="Kalinowski J."/>
            <person name="Kegler C."/>
            <person name="Knauber T."/>
            <person name="Konietzny S."/>
            <person name="Kopp M."/>
            <person name="Krause L."/>
            <person name="Krug D."/>
            <person name="Linke B."/>
            <person name="Mahmud T."/>
            <person name="Martinez-Arias R."/>
            <person name="McHardy A.C."/>
            <person name="Merai M."/>
            <person name="Meyer F."/>
            <person name="Mormann S."/>
            <person name="Munoz-Dorado J."/>
            <person name="Perez J."/>
            <person name="Pradella S."/>
            <person name="Rachid S."/>
            <person name="Raddatz G."/>
            <person name="Rosenau F."/>
            <person name="Rueckert C."/>
            <person name="Sasse F."/>
            <person name="Scharfe M."/>
            <person name="Schuster S.C."/>
            <person name="Suen G."/>
            <person name="Treuner-Lange A."/>
            <person name="Velicer G.J."/>
            <person name="Vorholter F.-J."/>
            <person name="Weissman K.J."/>
            <person name="Welch R.D."/>
            <person name="Wenzel S.C."/>
            <person name="Whitworth D.E."/>
            <person name="Wilhelm S."/>
            <person name="Wittmann C."/>
            <person name="Bloecker H."/>
            <person name="Puehler A."/>
            <person name="Mueller R."/>
        </authorList>
    </citation>
    <scope>NUCLEOTIDE SEQUENCE [LARGE SCALE GENOMIC DNA]</scope>
    <source>
        <strain>So ce56</strain>
    </source>
</reference>
<name>RL11_SORC5</name>
<proteinExistence type="inferred from homology"/>
<accession>A9GRA1</accession>
<dbReference type="EMBL" id="AM746676">
    <property type="protein sequence ID" value="CAN90563.1"/>
    <property type="molecule type" value="Genomic_DNA"/>
</dbReference>
<dbReference type="RefSeq" id="WP_012233041.1">
    <property type="nucleotide sequence ID" value="NC_010162.1"/>
</dbReference>
<dbReference type="SMR" id="A9GRA1"/>
<dbReference type="STRING" id="448385.sce0406"/>
<dbReference type="KEGG" id="scl:sce0406"/>
<dbReference type="eggNOG" id="COG0080">
    <property type="taxonomic scope" value="Bacteria"/>
</dbReference>
<dbReference type="HOGENOM" id="CLU_074237_2_0_7"/>
<dbReference type="OrthoDB" id="9802408at2"/>
<dbReference type="BioCyc" id="SCEL448385:SCE_RS02140-MONOMER"/>
<dbReference type="Proteomes" id="UP000002139">
    <property type="component" value="Chromosome"/>
</dbReference>
<dbReference type="GO" id="GO:0022625">
    <property type="term" value="C:cytosolic large ribosomal subunit"/>
    <property type="evidence" value="ECO:0007669"/>
    <property type="project" value="TreeGrafter"/>
</dbReference>
<dbReference type="GO" id="GO:0070180">
    <property type="term" value="F:large ribosomal subunit rRNA binding"/>
    <property type="evidence" value="ECO:0007669"/>
    <property type="project" value="UniProtKB-UniRule"/>
</dbReference>
<dbReference type="GO" id="GO:0003735">
    <property type="term" value="F:structural constituent of ribosome"/>
    <property type="evidence" value="ECO:0007669"/>
    <property type="project" value="InterPro"/>
</dbReference>
<dbReference type="GO" id="GO:0006412">
    <property type="term" value="P:translation"/>
    <property type="evidence" value="ECO:0007669"/>
    <property type="project" value="UniProtKB-UniRule"/>
</dbReference>
<dbReference type="CDD" id="cd00349">
    <property type="entry name" value="Ribosomal_L11"/>
    <property type="match status" value="1"/>
</dbReference>
<dbReference type="FunFam" id="1.10.10.250:FF:000001">
    <property type="entry name" value="50S ribosomal protein L11"/>
    <property type="match status" value="1"/>
</dbReference>
<dbReference type="FunFam" id="3.30.1550.10:FF:000001">
    <property type="entry name" value="50S ribosomal protein L11"/>
    <property type="match status" value="1"/>
</dbReference>
<dbReference type="Gene3D" id="1.10.10.250">
    <property type="entry name" value="Ribosomal protein L11, C-terminal domain"/>
    <property type="match status" value="1"/>
</dbReference>
<dbReference type="Gene3D" id="3.30.1550.10">
    <property type="entry name" value="Ribosomal protein L11/L12, N-terminal domain"/>
    <property type="match status" value="1"/>
</dbReference>
<dbReference type="HAMAP" id="MF_00736">
    <property type="entry name" value="Ribosomal_uL11"/>
    <property type="match status" value="1"/>
</dbReference>
<dbReference type="InterPro" id="IPR000911">
    <property type="entry name" value="Ribosomal_uL11"/>
</dbReference>
<dbReference type="InterPro" id="IPR006519">
    <property type="entry name" value="Ribosomal_uL11_bac-typ"/>
</dbReference>
<dbReference type="InterPro" id="IPR020783">
    <property type="entry name" value="Ribosomal_uL11_C"/>
</dbReference>
<dbReference type="InterPro" id="IPR036769">
    <property type="entry name" value="Ribosomal_uL11_C_sf"/>
</dbReference>
<dbReference type="InterPro" id="IPR020785">
    <property type="entry name" value="Ribosomal_uL11_CS"/>
</dbReference>
<dbReference type="InterPro" id="IPR020784">
    <property type="entry name" value="Ribosomal_uL11_N"/>
</dbReference>
<dbReference type="InterPro" id="IPR036796">
    <property type="entry name" value="Ribosomal_uL11_N_sf"/>
</dbReference>
<dbReference type="NCBIfam" id="TIGR01632">
    <property type="entry name" value="L11_bact"/>
    <property type="match status" value="1"/>
</dbReference>
<dbReference type="PANTHER" id="PTHR11661">
    <property type="entry name" value="60S RIBOSOMAL PROTEIN L12"/>
    <property type="match status" value="1"/>
</dbReference>
<dbReference type="PANTHER" id="PTHR11661:SF1">
    <property type="entry name" value="LARGE RIBOSOMAL SUBUNIT PROTEIN UL11M"/>
    <property type="match status" value="1"/>
</dbReference>
<dbReference type="Pfam" id="PF00298">
    <property type="entry name" value="Ribosomal_L11"/>
    <property type="match status" value="1"/>
</dbReference>
<dbReference type="Pfam" id="PF03946">
    <property type="entry name" value="Ribosomal_L11_N"/>
    <property type="match status" value="1"/>
</dbReference>
<dbReference type="SMART" id="SM00649">
    <property type="entry name" value="RL11"/>
    <property type="match status" value="1"/>
</dbReference>
<dbReference type="SUPFAM" id="SSF54747">
    <property type="entry name" value="Ribosomal L11/L12e N-terminal domain"/>
    <property type="match status" value="1"/>
</dbReference>
<dbReference type="SUPFAM" id="SSF46906">
    <property type="entry name" value="Ribosomal protein L11, C-terminal domain"/>
    <property type="match status" value="1"/>
</dbReference>
<dbReference type="PROSITE" id="PS00359">
    <property type="entry name" value="RIBOSOMAL_L11"/>
    <property type="match status" value="1"/>
</dbReference>
<protein>
    <recommendedName>
        <fullName evidence="1">Large ribosomal subunit protein uL11</fullName>
    </recommendedName>
    <alternativeName>
        <fullName evidence="2">50S ribosomal protein L11</fullName>
    </alternativeName>
</protein>
<sequence length="147" mass="15672">MAKKVTGYVKLQLPAGKANPSPPVGPALGQHGVNIMAFCKDFNSRTAAQGDLIIPVVITVYSDRSFTFIMKTPPASVLLKKAAGLETKKKPGAGSKEPNKVKVGKVTQKQLKELAQLKMQDMNTTNLESAMRSMAGTARSMGIDVVD</sequence>
<evidence type="ECO:0000255" key="1">
    <source>
        <dbReference type="HAMAP-Rule" id="MF_00736"/>
    </source>
</evidence>
<evidence type="ECO:0000305" key="2"/>
<keyword id="KW-0488">Methylation</keyword>
<keyword id="KW-1185">Reference proteome</keyword>
<keyword id="KW-0687">Ribonucleoprotein</keyword>
<keyword id="KW-0689">Ribosomal protein</keyword>
<keyword id="KW-0694">RNA-binding</keyword>
<keyword id="KW-0699">rRNA-binding</keyword>